<dbReference type="PIR" id="A00068">
    <property type="entry name" value="CCEG"/>
</dbReference>
<dbReference type="SMR" id="P00076"/>
<dbReference type="iPTMnet" id="P00076"/>
<dbReference type="GO" id="GO:0005758">
    <property type="term" value="C:mitochondrial intermembrane space"/>
    <property type="evidence" value="ECO:0007669"/>
    <property type="project" value="UniProtKB-SubCell"/>
</dbReference>
<dbReference type="GO" id="GO:0009055">
    <property type="term" value="F:electron transfer activity"/>
    <property type="evidence" value="ECO:0007669"/>
    <property type="project" value="InterPro"/>
</dbReference>
<dbReference type="GO" id="GO:0020037">
    <property type="term" value="F:heme binding"/>
    <property type="evidence" value="ECO:0007669"/>
    <property type="project" value="InterPro"/>
</dbReference>
<dbReference type="GO" id="GO:0046872">
    <property type="term" value="F:metal ion binding"/>
    <property type="evidence" value="ECO:0007669"/>
    <property type="project" value="UniProtKB-KW"/>
</dbReference>
<dbReference type="FunFam" id="1.10.760.10:FF:000001">
    <property type="entry name" value="Cytochrome c iso-1"/>
    <property type="match status" value="1"/>
</dbReference>
<dbReference type="Gene3D" id="1.10.760.10">
    <property type="entry name" value="Cytochrome c-like domain"/>
    <property type="match status" value="1"/>
</dbReference>
<dbReference type="InterPro" id="IPR009056">
    <property type="entry name" value="Cyt_c-like_dom"/>
</dbReference>
<dbReference type="InterPro" id="IPR036909">
    <property type="entry name" value="Cyt_c-like_dom_sf"/>
</dbReference>
<dbReference type="InterPro" id="IPR002327">
    <property type="entry name" value="Cyt_c_1A/1B"/>
</dbReference>
<dbReference type="PANTHER" id="PTHR11961">
    <property type="entry name" value="CYTOCHROME C"/>
    <property type="match status" value="1"/>
</dbReference>
<dbReference type="Pfam" id="PF00034">
    <property type="entry name" value="Cytochrom_C"/>
    <property type="match status" value="1"/>
</dbReference>
<dbReference type="PRINTS" id="PR00604">
    <property type="entry name" value="CYTCHRMECIAB"/>
</dbReference>
<dbReference type="SUPFAM" id="SSF46626">
    <property type="entry name" value="Cytochrome c"/>
    <property type="match status" value="1"/>
</dbReference>
<dbReference type="PROSITE" id="PS51007">
    <property type="entry name" value="CYTC"/>
    <property type="match status" value="1"/>
</dbReference>
<feature type="chain" id="PRO_0000108314" description="Cytochrome c">
    <location>
        <begin position="1"/>
        <end position="102"/>
    </location>
</feature>
<feature type="region of interest" description="Disordered" evidence="1">
    <location>
        <begin position="1"/>
        <end position="25"/>
    </location>
</feature>
<feature type="compositionally biased region" description="Basic and acidic residues" evidence="1">
    <location>
        <begin position="1"/>
        <end position="11"/>
    </location>
</feature>
<feature type="binding site" description="covalent" evidence="2">
    <location>
        <position position="17"/>
    </location>
    <ligand>
        <name>heme c</name>
        <dbReference type="ChEBI" id="CHEBI:61717"/>
    </ligand>
</feature>
<feature type="binding site" description="axial binding residue">
    <location>
        <position position="18"/>
    </location>
    <ligand>
        <name>heme c</name>
        <dbReference type="ChEBI" id="CHEBI:61717"/>
    </ligand>
    <ligandPart>
        <name>Fe</name>
        <dbReference type="ChEBI" id="CHEBI:18248"/>
    </ligandPart>
</feature>
<feature type="binding site" description="axial binding residue">
    <location>
        <position position="79"/>
    </location>
    <ligand>
        <name>heme c</name>
        <dbReference type="ChEBI" id="CHEBI:61717"/>
    </ligand>
    <ligandPart>
        <name>Fe</name>
        <dbReference type="ChEBI" id="CHEBI:18248"/>
    </ligandPart>
</feature>
<feature type="modified residue" description="N-acetylglycine" evidence="2">
    <location>
        <position position="1"/>
    </location>
</feature>
<feature type="modified residue" description="N6,N6,N6-trimethyllysine" evidence="2">
    <location>
        <position position="85"/>
    </location>
</feature>
<protein>
    <recommendedName>
        <fullName>Cytochrome c</fullName>
    </recommendedName>
</protein>
<name>CYC_EUGGR</name>
<reference key="1">
    <citation type="journal article" date="1975" name="Biochem. J.">
        <title>Purification, properties and amino acid sequence of atypical cytochrome c from two protozoa, Euglena gracilis and Crithidia oncopelti.</title>
        <authorList>
            <person name="Pettigrew G.W."/>
            <person name="Leaver J.L."/>
            <person name="Meyer T.E."/>
            <person name="Ryle A.P."/>
        </authorList>
    </citation>
    <scope>PROTEIN SEQUENCE</scope>
    <scope>ACETYLATION AT GLY-1</scope>
    <scope>METHYLATION AT LYS-85</scope>
</reference>
<keyword id="KW-0007">Acetylation</keyword>
<keyword id="KW-0903">Direct protein sequencing</keyword>
<keyword id="KW-0249">Electron transport</keyword>
<keyword id="KW-0349">Heme</keyword>
<keyword id="KW-0408">Iron</keyword>
<keyword id="KW-0479">Metal-binding</keyword>
<keyword id="KW-0488">Methylation</keyword>
<keyword id="KW-0496">Mitochondrion</keyword>
<keyword id="KW-0679">Respiratory chain</keyword>
<keyword id="KW-0813">Transport</keyword>
<comment type="function">
    <text>Electron carrier protein. The oxidized form of the cytochrome c heme group can accept an electron from the heme group of the cytochrome c1 subunit of cytochrome reductase. Cytochrome c then transfers this electron to the cytochrome oxidase complex, the final protein carrier in the mitochondrial electron-transport chain.</text>
</comment>
<comment type="subcellular location">
    <subcellularLocation>
        <location>Mitochondrion intermembrane space</location>
    </subcellularLocation>
    <text>Loosely associated with the inner membrane.</text>
</comment>
<comment type="PTM">
    <text>Binds 1 heme c group covalently per subunit.</text>
</comment>
<comment type="similarity">
    <text evidence="3">Belongs to the cytochrome c family.</text>
</comment>
<comment type="online information" name="Protein Spotlight">
    <link uri="https://www.proteinspotlight.org/back_issues/076"/>
    <text>Life shuttle - Issue 76 of November 2006</text>
</comment>
<proteinExistence type="evidence at protein level"/>
<evidence type="ECO:0000256" key="1">
    <source>
        <dbReference type="SAM" id="MobiDB-lite"/>
    </source>
</evidence>
<evidence type="ECO:0000269" key="2">
    <source>
    </source>
</evidence>
<evidence type="ECO:0000305" key="3"/>
<organism>
    <name type="scientific">Euglena gracilis</name>
    <dbReference type="NCBI Taxonomy" id="3039"/>
    <lineage>
        <taxon>Eukaryota</taxon>
        <taxon>Discoba</taxon>
        <taxon>Euglenozoa</taxon>
        <taxon>Euglenida</taxon>
        <taxon>Spirocuta</taxon>
        <taxon>Euglenophyceae</taxon>
        <taxon>Euglenales</taxon>
        <taxon>Euglenaceae</taxon>
        <taxon>Euglena</taxon>
    </lineage>
</organism>
<sequence length="102" mass="11210">GDAERGKKLFESRAAQCHSAQKGVNSTGPSLWGVYGRTSGSVPGYAYSNANKNAAIVWEEETLHKFLENPKKYVPGTKMAFAGIKAKKDRQDIIAYMKTLKD</sequence>
<accession>P00076</accession>